<proteinExistence type="inferred from homology"/>
<organism>
    <name type="scientific">Halorhodospira halophila (strain DSM 244 / SL1)</name>
    <name type="common">Ectothiorhodospira halophila (strain DSM 244 / SL1)</name>
    <dbReference type="NCBI Taxonomy" id="349124"/>
    <lineage>
        <taxon>Bacteria</taxon>
        <taxon>Pseudomonadati</taxon>
        <taxon>Pseudomonadota</taxon>
        <taxon>Gammaproteobacteria</taxon>
        <taxon>Chromatiales</taxon>
        <taxon>Ectothiorhodospiraceae</taxon>
        <taxon>Halorhodospira</taxon>
    </lineage>
</organism>
<keyword id="KW-1185">Reference proteome</keyword>
<keyword id="KW-0687">Ribonucleoprotein</keyword>
<keyword id="KW-0689">Ribosomal protein</keyword>
<keyword id="KW-0694">RNA-binding</keyword>
<keyword id="KW-0699">rRNA-binding</keyword>
<name>RL18_HALHL</name>
<accession>A1WVA6</accession>
<dbReference type="EMBL" id="CP000544">
    <property type="protein sequence ID" value="ABM61618.1"/>
    <property type="molecule type" value="Genomic_DNA"/>
</dbReference>
<dbReference type="RefSeq" id="WP_011813641.1">
    <property type="nucleotide sequence ID" value="NC_008789.1"/>
</dbReference>
<dbReference type="SMR" id="A1WVA6"/>
<dbReference type="STRING" id="349124.Hhal_0842"/>
<dbReference type="KEGG" id="hha:Hhal_0842"/>
<dbReference type="eggNOG" id="COG0256">
    <property type="taxonomic scope" value="Bacteria"/>
</dbReference>
<dbReference type="HOGENOM" id="CLU_098841_0_1_6"/>
<dbReference type="OrthoDB" id="9810939at2"/>
<dbReference type="Proteomes" id="UP000000647">
    <property type="component" value="Chromosome"/>
</dbReference>
<dbReference type="GO" id="GO:0022625">
    <property type="term" value="C:cytosolic large ribosomal subunit"/>
    <property type="evidence" value="ECO:0007669"/>
    <property type="project" value="TreeGrafter"/>
</dbReference>
<dbReference type="GO" id="GO:0008097">
    <property type="term" value="F:5S rRNA binding"/>
    <property type="evidence" value="ECO:0007669"/>
    <property type="project" value="TreeGrafter"/>
</dbReference>
<dbReference type="GO" id="GO:0003735">
    <property type="term" value="F:structural constituent of ribosome"/>
    <property type="evidence" value="ECO:0007669"/>
    <property type="project" value="InterPro"/>
</dbReference>
<dbReference type="GO" id="GO:0006412">
    <property type="term" value="P:translation"/>
    <property type="evidence" value="ECO:0007669"/>
    <property type="project" value="UniProtKB-UniRule"/>
</dbReference>
<dbReference type="CDD" id="cd00432">
    <property type="entry name" value="Ribosomal_L18_L5e"/>
    <property type="match status" value="1"/>
</dbReference>
<dbReference type="FunFam" id="3.30.420.100:FF:000001">
    <property type="entry name" value="50S ribosomal protein L18"/>
    <property type="match status" value="1"/>
</dbReference>
<dbReference type="Gene3D" id="3.30.420.100">
    <property type="match status" value="1"/>
</dbReference>
<dbReference type="HAMAP" id="MF_01337_B">
    <property type="entry name" value="Ribosomal_uL18_B"/>
    <property type="match status" value="1"/>
</dbReference>
<dbReference type="InterPro" id="IPR004389">
    <property type="entry name" value="Ribosomal_uL18_bac-type"/>
</dbReference>
<dbReference type="InterPro" id="IPR005484">
    <property type="entry name" value="Ribosomal_uL18_bac/euk"/>
</dbReference>
<dbReference type="NCBIfam" id="TIGR00060">
    <property type="entry name" value="L18_bact"/>
    <property type="match status" value="1"/>
</dbReference>
<dbReference type="PANTHER" id="PTHR12899">
    <property type="entry name" value="39S RIBOSOMAL PROTEIN L18, MITOCHONDRIAL"/>
    <property type="match status" value="1"/>
</dbReference>
<dbReference type="PANTHER" id="PTHR12899:SF3">
    <property type="entry name" value="LARGE RIBOSOMAL SUBUNIT PROTEIN UL18M"/>
    <property type="match status" value="1"/>
</dbReference>
<dbReference type="Pfam" id="PF00861">
    <property type="entry name" value="Ribosomal_L18p"/>
    <property type="match status" value="1"/>
</dbReference>
<dbReference type="SUPFAM" id="SSF53137">
    <property type="entry name" value="Translational machinery components"/>
    <property type="match status" value="1"/>
</dbReference>
<evidence type="ECO:0000255" key="1">
    <source>
        <dbReference type="HAMAP-Rule" id="MF_01337"/>
    </source>
</evidence>
<evidence type="ECO:0000305" key="2"/>
<feature type="chain" id="PRO_1000053034" description="Large ribosomal subunit protein uL18">
    <location>
        <begin position="1"/>
        <end position="117"/>
    </location>
</feature>
<reference key="1">
    <citation type="submission" date="2006-12" db="EMBL/GenBank/DDBJ databases">
        <title>Complete sequence of Halorhodospira halophila SL1.</title>
        <authorList>
            <consortium name="US DOE Joint Genome Institute"/>
            <person name="Copeland A."/>
            <person name="Lucas S."/>
            <person name="Lapidus A."/>
            <person name="Barry K."/>
            <person name="Detter J.C."/>
            <person name="Glavina del Rio T."/>
            <person name="Hammon N."/>
            <person name="Israni S."/>
            <person name="Dalin E."/>
            <person name="Tice H."/>
            <person name="Pitluck S."/>
            <person name="Saunders E."/>
            <person name="Brettin T."/>
            <person name="Bruce D."/>
            <person name="Han C."/>
            <person name="Tapia R."/>
            <person name="Schmutz J."/>
            <person name="Larimer F."/>
            <person name="Land M."/>
            <person name="Hauser L."/>
            <person name="Kyrpides N."/>
            <person name="Mikhailova N."/>
            <person name="Hoff W."/>
            <person name="Richardson P."/>
        </authorList>
    </citation>
    <scope>NUCLEOTIDE SEQUENCE [LARGE SCALE GENOMIC DNA]</scope>
    <source>
        <strain>DSM 244 / SL1</strain>
    </source>
</reference>
<comment type="function">
    <text evidence="1">This is one of the proteins that bind and probably mediate the attachment of the 5S RNA into the large ribosomal subunit, where it forms part of the central protuberance.</text>
</comment>
<comment type="subunit">
    <text evidence="1">Part of the 50S ribosomal subunit; part of the 5S rRNA/L5/L18/L25 subcomplex. Contacts the 5S and 23S rRNAs.</text>
</comment>
<comment type="similarity">
    <text evidence="1">Belongs to the universal ribosomal protein uL18 family.</text>
</comment>
<sequence>MDKKTARMRRARKSRGRIRDVGAYRLSVHRTPRHIYAQVQQPDGATTLAAASTVEPALRQRSEGTGNVSAAQEVGRLIAERAKAAGIEQVAFDRGGYQYHGRVQALAEAAREAGLKF</sequence>
<protein>
    <recommendedName>
        <fullName evidence="1">Large ribosomal subunit protein uL18</fullName>
    </recommendedName>
    <alternativeName>
        <fullName evidence="2">50S ribosomal protein L18</fullName>
    </alternativeName>
</protein>
<gene>
    <name evidence="1" type="primary">rplR</name>
    <name type="ordered locus">Hhal_0842</name>
</gene>